<feature type="signal peptide" evidence="2">
    <location>
        <begin position="1" status="less than"/>
        <end position="11"/>
    </location>
</feature>
<feature type="chain" id="PRO_0000016985" description="Beta-lactamase SHV-6">
    <location>
        <begin position="12"/>
        <end position="260" status="greater than"/>
    </location>
</feature>
<feature type="active site" description="Acyl-ester intermediate" evidence="3">
    <location>
        <position position="56"/>
    </location>
</feature>
<feature type="active site" description="Proton acceptor" evidence="1">
    <location>
        <position position="154"/>
    </location>
</feature>
<feature type="binding site" evidence="1">
    <location>
        <begin position="220"/>
        <end position="222"/>
    </location>
    <ligand>
        <name>substrate</name>
    </ligand>
</feature>
<feature type="disulfide bond" evidence="1">
    <location>
        <begin position="63"/>
        <end position="109"/>
    </location>
</feature>
<feature type="non-terminal residue">
    <location>
        <position position="1"/>
    </location>
</feature>
<feature type="non-terminal residue">
    <location>
        <position position="260"/>
    </location>
</feature>
<accession>P96348</accession>
<sequence length="260" mass="28157">LLATLPLAVHASPQPLEQIKLSESQLSGRVGMIEMDLASGRTLTAWRADERFPMMSTFKVVLCGAVLARVDAGDEQLERKIHYRQQDLVDYSPVSEKHLADGMTVGELCAAAITMSDNSAANLLLATVGGPAGLTAFLRQIGDNVTRLDRWETELNEALPGDARATTTPASMAATLRKLLTSQRLSARSQRQLLQWMVDDRVAGPLIRSVLPAGWFIADKTGAGERGARGIVALLGPNNKAERIVVIYLRDTPASMAERN</sequence>
<reference key="1">
    <citation type="journal article" date="1997" name="FEMS Microbiol. Lett.">
        <title>Substitution of alanine for aspartate at position 179 in the SHV-6 extended-spectrum beta-lactamase.</title>
        <authorList>
            <person name="Arlet G."/>
            <person name="Rouveau M."/>
            <person name="Philippon A."/>
        </authorList>
    </citation>
    <scope>NUCLEOTIDE SEQUENCE [GENOMIC DNA]</scope>
    <source>
        <strain>SLK-47</strain>
    </source>
</reference>
<reference key="2">
    <citation type="journal article" date="1991" name="Biochem. J.">
        <title>A standard numbering scheme for the class A beta-lactamases.</title>
        <authorList>
            <person name="Ambler R.P."/>
            <person name="Coulson A.F."/>
            <person name="Frere J.M."/>
            <person name="Ghuysen J.M."/>
            <person name="Joris B."/>
            <person name="Forsman M."/>
            <person name="Levesque R.C."/>
            <person name="Tiraby G."/>
            <person name="Waley S.G."/>
        </authorList>
    </citation>
    <scope>AMINO ACID NUMBERING SCHEME</scope>
</reference>
<organism>
    <name type="scientific">Klebsiella pneumoniae</name>
    <dbReference type="NCBI Taxonomy" id="573"/>
    <lineage>
        <taxon>Bacteria</taxon>
        <taxon>Pseudomonadati</taxon>
        <taxon>Pseudomonadota</taxon>
        <taxon>Gammaproteobacteria</taxon>
        <taxon>Enterobacterales</taxon>
        <taxon>Enterobacteriaceae</taxon>
        <taxon>Klebsiella/Raoultella group</taxon>
        <taxon>Klebsiella</taxon>
        <taxon>Klebsiella pneumoniae complex</taxon>
    </lineage>
</organism>
<gene>
    <name type="primary">bla</name>
    <name type="synonym">shv6</name>
</gene>
<proteinExistence type="inferred from homology"/>
<comment type="function">
    <text>SHV enzymes hydrolyze broad spectrum cephalosporins notably cefotaxime and ceftazidime.</text>
</comment>
<comment type="catalytic activity">
    <reaction evidence="3">
        <text>a beta-lactam + H2O = a substituted beta-amino acid</text>
        <dbReference type="Rhea" id="RHEA:20401"/>
        <dbReference type="ChEBI" id="CHEBI:15377"/>
        <dbReference type="ChEBI" id="CHEBI:35627"/>
        <dbReference type="ChEBI" id="CHEBI:140347"/>
        <dbReference type="EC" id="3.5.2.6"/>
    </reaction>
</comment>
<comment type="miscellaneous">
    <text evidence="5">The class A beta-lactamase family has a specific amino-acid numbering system, sometimes called Ambler or ABL numbering and often misspelt as Amber. A multiple sequence alignment was used to derive a consensus sequence and then the consensus was numbered taking into account insertions and deletions. This allows use of identical numbers, e.g. for active site residues, despite differences in protein length. UniProt always uses natural numbering of residues, hence there appear to be differences in numbering between this entry and some papers.</text>
</comment>
<comment type="similarity">
    <text evidence="4">Belongs to the class-A beta-lactamase family.</text>
</comment>
<keyword id="KW-0046">Antibiotic resistance</keyword>
<keyword id="KW-1015">Disulfide bond</keyword>
<keyword id="KW-0378">Hydrolase</keyword>
<keyword id="KW-0732">Signal</keyword>
<dbReference type="EC" id="3.5.2.6"/>
<dbReference type="EMBL" id="Y11069">
    <property type="protein sequence ID" value="CAA71948.1"/>
    <property type="molecule type" value="Genomic_DNA"/>
</dbReference>
<dbReference type="SMR" id="P96348"/>
<dbReference type="KEGG" id="ag:CAA71948"/>
<dbReference type="GO" id="GO:0008800">
    <property type="term" value="F:beta-lactamase activity"/>
    <property type="evidence" value="ECO:0007669"/>
    <property type="project" value="UniProtKB-EC"/>
</dbReference>
<dbReference type="GO" id="GO:0030655">
    <property type="term" value="P:beta-lactam antibiotic catabolic process"/>
    <property type="evidence" value="ECO:0007669"/>
    <property type="project" value="InterPro"/>
</dbReference>
<dbReference type="GO" id="GO:0046677">
    <property type="term" value="P:response to antibiotic"/>
    <property type="evidence" value="ECO:0007669"/>
    <property type="project" value="UniProtKB-KW"/>
</dbReference>
<dbReference type="Gene3D" id="3.40.710.10">
    <property type="entry name" value="DD-peptidase/beta-lactamase superfamily"/>
    <property type="match status" value="1"/>
</dbReference>
<dbReference type="InterPro" id="IPR012338">
    <property type="entry name" value="Beta-lactam/transpept-like"/>
</dbReference>
<dbReference type="InterPro" id="IPR045155">
    <property type="entry name" value="Beta-lactam_cat"/>
</dbReference>
<dbReference type="InterPro" id="IPR000871">
    <property type="entry name" value="Beta-lactam_class-A"/>
</dbReference>
<dbReference type="InterPro" id="IPR023650">
    <property type="entry name" value="Beta-lactam_class-A_AS"/>
</dbReference>
<dbReference type="NCBIfam" id="NF033103">
    <property type="entry name" value="bla_class_A"/>
    <property type="match status" value="1"/>
</dbReference>
<dbReference type="NCBIfam" id="NF012143">
    <property type="entry name" value="SHV_LEN_OKP"/>
    <property type="match status" value="1"/>
</dbReference>
<dbReference type="PANTHER" id="PTHR35333">
    <property type="entry name" value="BETA-LACTAMASE"/>
    <property type="match status" value="1"/>
</dbReference>
<dbReference type="PANTHER" id="PTHR35333:SF3">
    <property type="entry name" value="BETA-LACTAMASE-TYPE TRANSPEPTIDASE FOLD CONTAINING PROTEIN"/>
    <property type="match status" value="1"/>
</dbReference>
<dbReference type="Pfam" id="PF13354">
    <property type="entry name" value="Beta-lactamase2"/>
    <property type="match status" value="1"/>
</dbReference>
<dbReference type="PRINTS" id="PR00118">
    <property type="entry name" value="BLACTAMASEA"/>
</dbReference>
<dbReference type="SUPFAM" id="SSF56601">
    <property type="entry name" value="beta-lactamase/transpeptidase-like"/>
    <property type="match status" value="1"/>
</dbReference>
<dbReference type="PROSITE" id="PS00146">
    <property type="entry name" value="BETA_LACTAMASE_A"/>
    <property type="match status" value="1"/>
</dbReference>
<name>BLA6_KLEPN</name>
<evidence type="ECO:0000250" key="1"/>
<evidence type="ECO:0000255" key="2"/>
<evidence type="ECO:0000255" key="3">
    <source>
        <dbReference type="PROSITE-ProRule" id="PRU10101"/>
    </source>
</evidence>
<evidence type="ECO:0000305" key="4"/>
<evidence type="ECO:0000305" key="5">
    <source>
    </source>
</evidence>
<protein>
    <recommendedName>
        <fullName>Beta-lactamase SHV-6</fullName>
        <ecNumber>3.5.2.6</ecNumber>
    </recommendedName>
</protein>